<gene>
    <name evidence="1" type="primary">lipA</name>
    <name type="ordered locus">Pmen_3791</name>
</gene>
<feature type="chain" id="PRO_0000325290" description="Lipoyl synthase">
    <location>
        <begin position="1"/>
        <end position="350"/>
    </location>
</feature>
<feature type="domain" description="Radical SAM core" evidence="2">
    <location>
        <begin position="85"/>
        <end position="303"/>
    </location>
</feature>
<feature type="region of interest" description="Disordered" evidence="3">
    <location>
        <begin position="1"/>
        <end position="39"/>
    </location>
</feature>
<feature type="binding site" evidence="1">
    <location>
        <position position="73"/>
    </location>
    <ligand>
        <name>[4Fe-4S] cluster</name>
        <dbReference type="ChEBI" id="CHEBI:49883"/>
        <label>1</label>
    </ligand>
</feature>
<feature type="binding site" evidence="1">
    <location>
        <position position="78"/>
    </location>
    <ligand>
        <name>[4Fe-4S] cluster</name>
        <dbReference type="ChEBI" id="CHEBI:49883"/>
        <label>1</label>
    </ligand>
</feature>
<feature type="binding site" evidence="1">
    <location>
        <position position="84"/>
    </location>
    <ligand>
        <name>[4Fe-4S] cluster</name>
        <dbReference type="ChEBI" id="CHEBI:49883"/>
        <label>1</label>
    </ligand>
</feature>
<feature type="binding site" evidence="1">
    <location>
        <position position="99"/>
    </location>
    <ligand>
        <name>[4Fe-4S] cluster</name>
        <dbReference type="ChEBI" id="CHEBI:49883"/>
        <label>2</label>
        <note>4Fe-4S-S-AdoMet</note>
    </ligand>
</feature>
<feature type="binding site" evidence="1">
    <location>
        <position position="103"/>
    </location>
    <ligand>
        <name>[4Fe-4S] cluster</name>
        <dbReference type="ChEBI" id="CHEBI:49883"/>
        <label>2</label>
        <note>4Fe-4S-S-AdoMet</note>
    </ligand>
</feature>
<feature type="binding site" evidence="1">
    <location>
        <position position="106"/>
    </location>
    <ligand>
        <name>[4Fe-4S] cluster</name>
        <dbReference type="ChEBI" id="CHEBI:49883"/>
        <label>2</label>
        <note>4Fe-4S-S-AdoMet</note>
    </ligand>
</feature>
<feature type="binding site" evidence="1">
    <location>
        <position position="314"/>
    </location>
    <ligand>
        <name>[4Fe-4S] cluster</name>
        <dbReference type="ChEBI" id="CHEBI:49883"/>
        <label>1</label>
    </ligand>
</feature>
<sequence length="350" mass="38651">MSDTSSPKPVASGEKFRTAQGITAIKDGQKRRASAEPQVFEPKPKWLRVKAPGGSRFEAVKRNVGEHRLSTVCQESHCPNMGECWSNGTATIMLMGSVCTRACRFCAVDTGNPNGWLDLEEPQNTAKSVELMALRYIVLTSVDRDDLEDGGASHYAACVRAIKENTPQVVVEALTPDFDGDHQAIERVVDSGLEVFAQNVETVKRLTHVVRDPRAGYEKTLKVLEHAKKHRPQVLTKTSLMLGLGETDEEILETMDDLRAIGVDILTLGQYLQPTRNHLKVQRWVSPEEFNRLRDIGLEKGFMEVAAGPLVRSSYRADRVFEKNNLGLAAPLPVPGQEVDASLIPALNLN</sequence>
<proteinExistence type="inferred from homology"/>
<comment type="function">
    <text evidence="1">Catalyzes the radical-mediated insertion of two sulfur atoms into the C-6 and C-8 positions of the octanoyl moiety bound to the lipoyl domains of lipoate-dependent enzymes, thereby converting the octanoylated domains into lipoylated derivatives.</text>
</comment>
<comment type="catalytic activity">
    <reaction evidence="1">
        <text>[[Fe-S] cluster scaffold protein carrying a second [4Fe-4S](2+) cluster] + N(6)-octanoyl-L-lysyl-[protein] + 2 oxidized [2Fe-2S]-[ferredoxin] + 2 S-adenosyl-L-methionine + 4 H(+) = [[Fe-S] cluster scaffold protein] + N(6)-[(R)-dihydrolipoyl]-L-lysyl-[protein] + 4 Fe(3+) + 2 hydrogen sulfide + 2 5'-deoxyadenosine + 2 L-methionine + 2 reduced [2Fe-2S]-[ferredoxin]</text>
        <dbReference type="Rhea" id="RHEA:16585"/>
        <dbReference type="Rhea" id="RHEA-COMP:9928"/>
        <dbReference type="Rhea" id="RHEA-COMP:10000"/>
        <dbReference type="Rhea" id="RHEA-COMP:10001"/>
        <dbReference type="Rhea" id="RHEA-COMP:10475"/>
        <dbReference type="Rhea" id="RHEA-COMP:14568"/>
        <dbReference type="Rhea" id="RHEA-COMP:14569"/>
        <dbReference type="ChEBI" id="CHEBI:15378"/>
        <dbReference type="ChEBI" id="CHEBI:17319"/>
        <dbReference type="ChEBI" id="CHEBI:29034"/>
        <dbReference type="ChEBI" id="CHEBI:29919"/>
        <dbReference type="ChEBI" id="CHEBI:33722"/>
        <dbReference type="ChEBI" id="CHEBI:33737"/>
        <dbReference type="ChEBI" id="CHEBI:33738"/>
        <dbReference type="ChEBI" id="CHEBI:57844"/>
        <dbReference type="ChEBI" id="CHEBI:59789"/>
        <dbReference type="ChEBI" id="CHEBI:78809"/>
        <dbReference type="ChEBI" id="CHEBI:83100"/>
        <dbReference type="EC" id="2.8.1.8"/>
    </reaction>
</comment>
<comment type="cofactor">
    <cofactor evidence="1">
        <name>[4Fe-4S] cluster</name>
        <dbReference type="ChEBI" id="CHEBI:49883"/>
    </cofactor>
    <text evidence="1">Binds 2 [4Fe-4S] clusters per subunit. One cluster is coordinated with 3 cysteines and an exchangeable S-adenosyl-L-methionine.</text>
</comment>
<comment type="pathway">
    <text evidence="1">Protein modification; protein lipoylation via endogenous pathway; protein N(6)-(lipoyl)lysine from octanoyl-[acyl-carrier-protein]: step 2/2.</text>
</comment>
<comment type="subcellular location">
    <subcellularLocation>
        <location evidence="1">Cytoplasm</location>
    </subcellularLocation>
</comment>
<comment type="similarity">
    <text evidence="1">Belongs to the radical SAM superfamily. Lipoyl synthase family.</text>
</comment>
<name>LIPA_ECTM1</name>
<protein>
    <recommendedName>
        <fullName evidence="1">Lipoyl synthase</fullName>
        <ecNumber evidence="1">2.8.1.8</ecNumber>
    </recommendedName>
    <alternativeName>
        <fullName evidence="1">Lip-syn</fullName>
        <shortName evidence="1">LS</shortName>
    </alternativeName>
    <alternativeName>
        <fullName evidence="1">Lipoate synthase</fullName>
    </alternativeName>
    <alternativeName>
        <fullName evidence="1">Lipoic acid synthase</fullName>
    </alternativeName>
    <alternativeName>
        <fullName evidence="1">Sulfur insertion protein LipA</fullName>
    </alternativeName>
</protein>
<keyword id="KW-0004">4Fe-4S</keyword>
<keyword id="KW-0963">Cytoplasm</keyword>
<keyword id="KW-0408">Iron</keyword>
<keyword id="KW-0411">Iron-sulfur</keyword>
<keyword id="KW-0479">Metal-binding</keyword>
<keyword id="KW-0949">S-adenosyl-L-methionine</keyword>
<keyword id="KW-0808">Transferase</keyword>
<dbReference type="EC" id="2.8.1.8" evidence="1"/>
<dbReference type="EMBL" id="CP000680">
    <property type="protein sequence ID" value="ABP86539.1"/>
    <property type="molecule type" value="Genomic_DNA"/>
</dbReference>
<dbReference type="SMR" id="A4XYX3"/>
<dbReference type="STRING" id="399739.Pmen_3791"/>
<dbReference type="KEGG" id="pmy:Pmen_3791"/>
<dbReference type="PATRIC" id="fig|399739.8.peg.3844"/>
<dbReference type="eggNOG" id="COG0320">
    <property type="taxonomic scope" value="Bacteria"/>
</dbReference>
<dbReference type="HOGENOM" id="CLU_033144_2_0_6"/>
<dbReference type="OrthoDB" id="9787898at2"/>
<dbReference type="UniPathway" id="UPA00538">
    <property type="reaction ID" value="UER00593"/>
</dbReference>
<dbReference type="GO" id="GO:0005737">
    <property type="term" value="C:cytoplasm"/>
    <property type="evidence" value="ECO:0007669"/>
    <property type="project" value="UniProtKB-SubCell"/>
</dbReference>
<dbReference type="GO" id="GO:0051539">
    <property type="term" value="F:4 iron, 4 sulfur cluster binding"/>
    <property type="evidence" value="ECO:0007669"/>
    <property type="project" value="UniProtKB-UniRule"/>
</dbReference>
<dbReference type="GO" id="GO:0016992">
    <property type="term" value="F:lipoate synthase activity"/>
    <property type="evidence" value="ECO:0007669"/>
    <property type="project" value="UniProtKB-UniRule"/>
</dbReference>
<dbReference type="GO" id="GO:0046872">
    <property type="term" value="F:metal ion binding"/>
    <property type="evidence" value="ECO:0007669"/>
    <property type="project" value="UniProtKB-KW"/>
</dbReference>
<dbReference type="CDD" id="cd01335">
    <property type="entry name" value="Radical_SAM"/>
    <property type="match status" value="1"/>
</dbReference>
<dbReference type="FunFam" id="3.20.20.70:FF:000040">
    <property type="entry name" value="Lipoyl synthase"/>
    <property type="match status" value="1"/>
</dbReference>
<dbReference type="Gene3D" id="3.20.20.70">
    <property type="entry name" value="Aldolase class I"/>
    <property type="match status" value="1"/>
</dbReference>
<dbReference type="HAMAP" id="MF_00206">
    <property type="entry name" value="Lipoyl_synth"/>
    <property type="match status" value="1"/>
</dbReference>
<dbReference type="InterPro" id="IPR013785">
    <property type="entry name" value="Aldolase_TIM"/>
</dbReference>
<dbReference type="InterPro" id="IPR006638">
    <property type="entry name" value="Elp3/MiaA/NifB-like_rSAM"/>
</dbReference>
<dbReference type="InterPro" id="IPR003698">
    <property type="entry name" value="Lipoyl_synth"/>
</dbReference>
<dbReference type="InterPro" id="IPR007197">
    <property type="entry name" value="rSAM"/>
</dbReference>
<dbReference type="NCBIfam" id="TIGR00510">
    <property type="entry name" value="lipA"/>
    <property type="match status" value="1"/>
</dbReference>
<dbReference type="NCBIfam" id="NF004019">
    <property type="entry name" value="PRK05481.1"/>
    <property type="match status" value="1"/>
</dbReference>
<dbReference type="NCBIfam" id="NF009544">
    <property type="entry name" value="PRK12928.1"/>
    <property type="match status" value="1"/>
</dbReference>
<dbReference type="PANTHER" id="PTHR10949">
    <property type="entry name" value="LIPOYL SYNTHASE"/>
    <property type="match status" value="1"/>
</dbReference>
<dbReference type="PANTHER" id="PTHR10949:SF0">
    <property type="entry name" value="LIPOYL SYNTHASE, MITOCHONDRIAL"/>
    <property type="match status" value="1"/>
</dbReference>
<dbReference type="Pfam" id="PF04055">
    <property type="entry name" value="Radical_SAM"/>
    <property type="match status" value="1"/>
</dbReference>
<dbReference type="PIRSF" id="PIRSF005963">
    <property type="entry name" value="Lipoyl_synth"/>
    <property type="match status" value="1"/>
</dbReference>
<dbReference type="SFLD" id="SFLDF00271">
    <property type="entry name" value="lipoyl_synthase"/>
    <property type="match status" value="1"/>
</dbReference>
<dbReference type="SFLD" id="SFLDG01058">
    <property type="entry name" value="lipoyl_synthase_like"/>
    <property type="match status" value="1"/>
</dbReference>
<dbReference type="SMART" id="SM00729">
    <property type="entry name" value="Elp3"/>
    <property type="match status" value="1"/>
</dbReference>
<dbReference type="SUPFAM" id="SSF102114">
    <property type="entry name" value="Radical SAM enzymes"/>
    <property type="match status" value="1"/>
</dbReference>
<dbReference type="PROSITE" id="PS51918">
    <property type="entry name" value="RADICAL_SAM"/>
    <property type="match status" value="1"/>
</dbReference>
<reference key="1">
    <citation type="submission" date="2007-04" db="EMBL/GenBank/DDBJ databases">
        <title>Complete sequence of Pseudomonas mendocina ymp.</title>
        <authorList>
            <consortium name="US DOE Joint Genome Institute"/>
            <person name="Copeland A."/>
            <person name="Lucas S."/>
            <person name="Lapidus A."/>
            <person name="Barry K."/>
            <person name="Glavina del Rio T."/>
            <person name="Dalin E."/>
            <person name="Tice H."/>
            <person name="Pitluck S."/>
            <person name="Kiss H."/>
            <person name="Brettin T."/>
            <person name="Detter J.C."/>
            <person name="Bruce D."/>
            <person name="Han C."/>
            <person name="Schmutz J."/>
            <person name="Larimer F."/>
            <person name="Land M."/>
            <person name="Hauser L."/>
            <person name="Kyrpides N."/>
            <person name="Mikhailova N."/>
            <person name="Hersman L."/>
            <person name="Dubois J."/>
            <person name="Maurice P."/>
            <person name="Richardson P."/>
        </authorList>
    </citation>
    <scope>NUCLEOTIDE SEQUENCE [LARGE SCALE GENOMIC DNA]</scope>
    <source>
        <strain>ymp</strain>
    </source>
</reference>
<organism>
    <name type="scientific">Ectopseudomonas mendocina (strain ymp)</name>
    <name type="common">Pseudomonas mendocina</name>
    <dbReference type="NCBI Taxonomy" id="399739"/>
    <lineage>
        <taxon>Bacteria</taxon>
        <taxon>Pseudomonadati</taxon>
        <taxon>Pseudomonadota</taxon>
        <taxon>Gammaproteobacteria</taxon>
        <taxon>Pseudomonadales</taxon>
        <taxon>Pseudomonadaceae</taxon>
        <taxon>Ectopseudomonas</taxon>
    </lineage>
</organism>
<evidence type="ECO:0000255" key="1">
    <source>
        <dbReference type="HAMAP-Rule" id="MF_00206"/>
    </source>
</evidence>
<evidence type="ECO:0000255" key="2">
    <source>
        <dbReference type="PROSITE-ProRule" id="PRU01266"/>
    </source>
</evidence>
<evidence type="ECO:0000256" key="3">
    <source>
        <dbReference type="SAM" id="MobiDB-lite"/>
    </source>
</evidence>
<accession>A4XYX3</accession>